<organism evidence="12">
    <name type="scientific">Homo sapiens</name>
    <name type="common">Human</name>
    <dbReference type="NCBI Taxonomy" id="9606"/>
    <lineage>
        <taxon>Eukaryota</taxon>
        <taxon>Metazoa</taxon>
        <taxon>Chordata</taxon>
        <taxon>Craniata</taxon>
        <taxon>Vertebrata</taxon>
        <taxon>Euteleostomi</taxon>
        <taxon>Mammalia</taxon>
        <taxon>Eutheria</taxon>
        <taxon>Euarchontoglires</taxon>
        <taxon>Primates</taxon>
        <taxon>Haplorrhini</taxon>
        <taxon>Catarrhini</taxon>
        <taxon>Hominidae</taxon>
        <taxon>Homo</taxon>
    </lineage>
</organism>
<protein>
    <recommendedName>
        <fullName evidence="9">Large ribosomal subunit protein mL65</fullName>
    </recommendedName>
    <alternativeName>
        <fullName>39S ribosomal protein S30, mitochondrial</fullName>
        <shortName>MRP-S30</shortName>
        <shortName>S30mt</shortName>
    </alternativeName>
    <alternativeName>
        <fullName evidence="10">Large ribosomal subunit protein mS30</fullName>
    </alternativeName>
    <alternativeName>
        <fullName>Programmed cell death protein 9</fullName>
    </alternativeName>
</protein>
<reference evidence="11" key="1">
    <citation type="journal article" date="1999" name="Cytogenet. Cell Genet.">
        <title>Cloning, expression, and mapping of PDCD9, the human homolog of Gallus gallus pro-apoptotic protein p52.</title>
        <authorList>
            <person name="Carim-Todd L."/>
            <person name="Sumoy L."/>
            <person name="Nadal M."/>
            <person name="Estivill X."/>
            <person name="Escarceller M."/>
        </authorList>
    </citation>
    <scope>NUCLEOTIDE SEQUENCE [MRNA]</scope>
    <scope>TISSUE SPECIFICITY</scope>
    <scope>VARIANT SER-33</scope>
</reference>
<reference evidence="12" key="2">
    <citation type="submission" date="2000-05" db="EMBL/GenBank/DDBJ databases">
        <authorList>
            <consortium name="The European IMAGE consortium"/>
        </authorList>
    </citation>
    <scope>NUCLEOTIDE SEQUENCE [LARGE SCALE MRNA]</scope>
    <scope>VARIANT SER-33</scope>
</reference>
<reference key="3">
    <citation type="journal article" date="2001" name="Genome Res.">
        <title>Towards a catalog of human genes and proteins: sequencing and analysis of 500 novel complete protein coding human cDNAs.</title>
        <authorList>
            <person name="Wiemann S."/>
            <person name="Weil B."/>
            <person name="Wellenreuther R."/>
            <person name="Gassenhuber J."/>
            <person name="Glassl S."/>
            <person name="Ansorge W."/>
            <person name="Boecher M."/>
            <person name="Bloecker H."/>
            <person name="Bauersachs S."/>
            <person name="Blum H."/>
            <person name="Lauber J."/>
            <person name="Duesterhoeft A."/>
            <person name="Beyer A."/>
            <person name="Koehrer K."/>
            <person name="Strack N."/>
            <person name="Mewes H.-W."/>
            <person name="Ottenwaelder B."/>
            <person name="Obermaier B."/>
            <person name="Tampe J."/>
            <person name="Heubner D."/>
            <person name="Wambutt R."/>
            <person name="Korn B."/>
            <person name="Klein M."/>
            <person name="Poustka A."/>
        </authorList>
    </citation>
    <scope>NUCLEOTIDE SEQUENCE [LARGE SCALE MRNA]</scope>
    <scope>VARIANT SER-33</scope>
    <source>
        <tissue>Kidney</tissue>
    </source>
</reference>
<reference key="4">
    <citation type="journal article" date="2004" name="Nat. Genet.">
        <title>Complete sequencing and characterization of 21,243 full-length human cDNAs.</title>
        <authorList>
            <person name="Ota T."/>
            <person name="Suzuki Y."/>
            <person name="Nishikawa T."/>
            <person name="Otsuki T."/>
            <person name="Sugiyama T."/>
            <person name="Irie R."/>
            <person name="Wakamatsu A."/>
            <person name="Hayashi K."/>
            <person name="Sato H."/>
            <person name="Nagai K."/>
            <person name="Kimura K."/>
            <person name="Makita H."/>
            <person name="Sekine M."/>
            <person name="Obayashi M."/>
            <person name="Nishi T."/>
            <person name="Shibahara T."/>
            <person name="Tanaka T."/>
            <person name="Ishii S."/>
            <person name="Yamamoto J."/>
            <person name="Saito K."/>
            <person name="Kawai Y."/>
            <person name="Isono Y."/>
            <person name="Nakamura Y."/>
            <person name="Nagahari K."/>
            <person name="Murakami K."/>
            <person name="Yasuda T."/>
            <person name="Iwayanagi T."/>
            <person name="Wagatsuma M."/>
            <person name="Shiratori A."/>
            <person name="Sudo H."/>
            <person name="Hosoiri T."/>
            <person name="Kaku Y."/>
            <person name="Kodaira H."/>
            <person name="Kondo H."/>
            <person name="Sugawara M."/>
            <person name="Takahashi M."/>
            <person name="Kanda K."/>
            <person name="Yokoi T."/>
            <person name="Furuya T."/>
            <person name="Kikkawa E."/>
            <person name="Omura Y."/>
            <person name="Abe K."/>
            <person name="Kamihara K."/>
            <person name="Katsuta N."/>
            <person name="Sato K."/>
            <person name="Tanikawa M."/>
            <person name="Yamazaki M."/>
            <person name="Ninomiya K."/>
            <person name="Ishibashi T."/>
            <person name="Yamashita H."/>
            <person name="Murakawa K."/>
            <person name="Fujimori K."/>
            <person name="Tanai H."/>
            <person name="Kimata M."/>
            <person name="Watanabe M."/>
            <person name="Hiraoka S."/>
            <person name="Chiba Y."/>
            <person name="Ishida S."/>
            <person name="Ono Y."/>
            <person name="Takiguchi S."/>
            <person name="Watanabe S."/>
            <person name="Yosida M."/>
            <person name="Hotuta T."/>
            <person name="Kusano J."/>
            <person name="Kanehori K."/>
            <person name="Takahashi-Fujii A."/>
            <person name="Hara H."/>
            <person name="Tanase T.-O."/>
            <person name="Nomura Y."/>
            <person name="Togiya S."/>
            <person name="Komai F."/>
            <person name="Hara R."/>
            <person name="Takeuchi K."/>
            <person name="Arita M."/>
            <person name="Imose N."/>
            <person name="Musashino K."/>
            <person name="Yuuki H."/>
            <person name="Oshima A."/>
            <person name="Sasaki N."/>
            <person name="Aotsuka S."/>
            <person name="Yoshikawa Y."/>
            <person name="Matsunawa H."/>
            <person name="Ichihara T."/>
            <person name="Shiohata N."/>
            <person name="Sano S."/>
            <person name="Moriya S."/>
            <person name="Momiyama H."/>
            <person name="Satoh N."/>
            <person name="Takami S."/>
            <person name="Terashima Y."/>
            <person name="Suzuki O."/>
            <person name="Nakagawa S."/>
            <person name="Senoh A."/>
            <person name="Mizoguchi H."/>
            <person name="Goto Y."/>
            <person name="Shimizu F."/>
            <person name="Wakebe H."/>
            <person name="Hishigaki H."/>
            <person name="Watanabe T."/>
            <person name="Sugiyama A."/>
            <person name="Takemoto M."/>
            <person name="Kawakami B."/>
            <person name="Yamazaki M."/>
            <person name="Watanabe K."/>
            <person name="Kumagai A."/>
            <person name="Itakura S."/>
            <person name="Fukuzumi Y."/>
            <person name="Fujimori Y."/>
            <person name="Komiyama M."/>
            <person name="Tashiro H."/>
            <person name="Tanigami A."/>
            <person name="Fujiwara T."/>
            <person name="Ono T."/>
            <person name="Yamada K."/>
            <person name="Fujii Y."/>
            <person name="Ozaki K."/>
            <person name="Hirao M."/>
            <person name="Ohmori Y."/>
            <person name="Kawabata A."/>
            <person name="Hikiji T."/>
            <person name="Kobatake N."/>
            <person name="Inagaki H."/>
            <person name="Ikema Y."/>
            <person name="Okamoto S."/>
            <person name="Okitani R."/>
            <person name="Kawakami T."/>
            <person name="Noguchi S."/>
            <person name="Itoh T."/>
            <person name="Shigeta K."/>
            <person name="Senba T."/>
            <person name="Matsumura K."/>
            <person name="Nakajima Y."/>
            <person name="Mizuno T."/>
            <person name="Morinaga M."/>
            <person name="Sasaki M."/>
            <person name="Togashi T."/>
            <person name="Oyama M."/>
            <person name="Hata H."/>
            <person name="Watanabe M."/>
            <person name="Komatsu T."/>
            <person name="Mizushima-Sugano J."/>
            <person name="Satoh T."/>
            <person name="Shirai Y."/>
            <person name="Takahashi Y."/>
            <person name="Nakagawa K."/>
            <person name="Okumura K."/>
            <person name="Nagase T."/>
            <person name="Nomura N."/>
            <person name="Kikuchi H."/>
            <person name="Masuho Y."/>
            <person name="Yamashita R."/>
            <person name="Nakai K."/>
            <person name="Yada T."/>
            <person name="Nakamura Y."/>
            <person name="Ohara O."/>
            <person name="Isogai T."/>
            <person name="Sugano S."/>
        </authorList>
    </citation>
    <scope>NUCLEOTIDE SEQUENCE [LARGE SCALE MRNA]</scope>
    <source>
        <tissue>Teratocarcinoma</tissue>
    </source>
</reference>
<reference key="5">
    <citation type="journal article" date="2004" name="Genome Res.">
        <title>The status, quality, and expansion of the NIH full-length cDNA project: the Mammalian Gene Collection (MGC).</title>
        <authorList>
            <consortium name="The MGC Project Team"/>
        </authorList>
    </citation>
    <scope>NUCLEOTIDE SEQUENCE [LARGE SCALE MRNA]</scope>
    <source>
        <tissue>Muscle</tissue>
    </source>
</reference>
<reference key="6">
    <citation type="journal article" date="2000" name="Genome Res.">
        <title>Cloning and functional analysis of cDNAs with open reading frames for 300 previously undefined genes expressed in CD34+ hematopoietic stem/progenitor cells.</title>
        <authorList>
            <person name="Zhang Q.-H."/>
            <person name="Ye M."/>
            <person name="Wu X.-Y."/>
            <person name="Ren S.-X."/>
            <person name="Zhao M."/>
            <person name="Zhao C.-J."/>
            <person name="Fu G."/>
            <person name="Shen Y."/>
            <person name="Fan H.-Y."/>
            <person name="Lu G."/>
            <person name="Zhong M."/>
            <person name="Xu X.-R."/>
            <person name="Han Z.-G."/>
            <person name="Zhang J.-W."/>
            <person name="Tao J."/>
            <person name="Huang Q.-H."/>
            <person name="Zhou J."/>
            <person name="Hu G.-X."/>
            <person name="Gu J."/>
            <person name="Chen S.-J."/>
            <person name="Chen Z."/>
        </authorList>
    </citation>
    <scope>NUCLEOTIDE SEQUENCE [LARGE SCALE MRNA] OF 89-439</scope>
    <source>
        <tissue>Bone marrow</tissue>
    </source>
</reference>
<reference key="7">
    <citation type="journal article" date="2001" name="Genomics">
        <title>The human mitochondrial ribosomal protein genes: mapping of 54 genes to the chromosomes and implications for human disorders.</title>
        <authorList>
            <person name="Kenmochi N."/>
            <person name="Suzuki T."/>
            <person name="Uechi T."/>
            <person name="Magoori M."/>
            <person name="Kuniba M."/>
            <person name="Higa S."/>
            <person name="Watanabe K."/>
            <person name="Tanaka T."/>
        </authorList>
    </citation>
    <scope>NUCLEOTIDE SEQUENCE [GENOMIC DNA] OF 275-284</scope>
</reference>
<reference evidence="11" key="8">
    <citation type="journal article" date="2001" name="J. Biol. Chem.">
        <title>The small subunit of the mammalian mitochondrial ribosome: identification of the full complement of ribosomal proteins present.</title>
        <authorList>
            <person name="Koc E.C."/>
            <person name="Burkhart W."/>
            <person name="Blackburn K."/>
            <person name="Moseley A."/>
            <person name="Spremulli L.L."/>
        </authorList>
    </citation>
    <scope>IDENTIFICATION</scope>
</reference>
<reference key="9">
    <citation type="journal article" date="2011" name="BMC Syst. Biol.">
        <title>Initial characterization of the human central proteome.</title>
        <authorList>
            <person name="Burkard T.R."/>
            <person name="Planyavsky M."/>
            <person name="Kaupe I."/>
            <person name="Breitwieser F.P."/>
            <person name="Buerckstuemmer T."/>
            <person name="Bennett K.L."/>
            <person name="Superti-Furga G."/>
            <person name="Colinge J."/>
        </authorList>
    </citation>
    <scope>IDENTIFICATION BY MASS SPECTROMETRY [LARGE SCALE ANALYSIS]</scope>
</reference>
<reference key="10">
    <citation type="journal article" date="2015" name="Proteomics">
        <title>N-terminome analysis of the human mitochondrial proteome.</title>
        <authorList>
            <person name="Vaca Jacome A.S."/>
            <person name="Rabilloud T."/>
            <person name="Schaeffer-Reiss C."/>
            <person name="Rompais M."/>
            <person name="Ayoub D."/>
            <person name="Lane L."/>
            <person name="Bairoch A."/>
            <person name="Van Dorsselaer A."/>
            <person name="Carapito C."/>
        </authorList>
    </citation>
    <scope>IDENTIFICATION BY MASS SPECTROMETRY [LARGE SCALE ANALYSIS]</scope>
</reference>
<reference key="11">
    <citation type="journal article" date="2016" name="Annu. Rev. Biochem.">
        <title>Structure and function of the mitochondrial ribosome.</title>
        <authorList>
            <person name="Greber B.J."/>
            <person name="Ban N."/>
        </authorList>
    </citation>
    <scope>NOMENCLATURE</scope>
</reference>
<reference key="12">
    <citation type="journal article" date="2014" name="Science">
        <title>Structure of the large ribosomal subunit from human mitochondria.</title>
        <authorList>
            <person name="Brown A."/>
            <person name="Amunts A."/>
            <person name="Bai X.C."/>
            <person name="Sugimoto Y."/>
            <person name="Edwards P.C."/>
            <person name="Murshudov G."/>
            <person name="Scheres S.H."/>
            <person name="Ramakrishnan V."/>
        </authorList>
    </citation>
    <scope>STRUCTURE BY ELECTRON MICROSCOPY (3.40 ANGSTROMS)</scope>
    <scope>SUBUNIT</scope>
</reference>
<reference key="13">
    <citation type="journal article" date="2015" name="Science">
        <title>Ribosome. The structure of the human mitochondrial ribosome.</title>
        <authorList>
            <person name="Amunts A."/>
            <person name="Brown A."/>
            <person name="Toots J."/>
            <person name="Scheres S.H."/>
            <person name="Ramakrishnan V."/>
        </authorList>
    </citation>
    <scope>STRUCTURE BY ELECTRON MICROSCOPY (3.50 ANGSTROMS)</scope>
    <scope>SUBUNIT</scope>
</reference>
<reference evidence="13 14" key="14">
    <citation type="journal article" date="2017" name="Nat. Struct. Mol. Biol.">
        <title>Structures of the human mitochondrial ribosome in native states of assembly.</title>
        <authorList>
            <person name="Brown A."/>
            <person name="Rathore S."/>
            <person name="Kimanius D."/>
            <person name="Aibara S."/>
            <person name="Bai X.C."/>
            <person name="Rorbach J."/>
            <person name="Amunts A."/>
            <person name="Ramakrishnan V."/>
        </authorList>
    </citation>
    <scope>STRUCTURE BY ELECTRON MICROSCOPY (3.03 ANGSTROMS)</scope>
    <scope>SUBCELLULAR LOCATION</scope>
    <scope>SUBUNIT</scope>
</reference>
<reference evidence="15 16" key="15">
    <citation type="journal article" date="2022" name="Nat. Commun.">
        <title>A late-stage assembly checkpoint of the human mitochondrial ribosome large subunit.</title>
        <authorList>
            <person name="Rebelo-Guiomar P."/>
            <person name="Pellegrino S."/>
            <person name="Dent K.C."/>
            <person name="Sas-Chen A."/>
            <person name="Miller-Fleming L."/>
            <person name="Garone C."/>
            <person name="Van Haute L."/>
            <person name="Rogan J.F."/>
            <person name="Dinan A."/>
            <person name="Firth A.E."/>
            <person name="Andrews B."/>
            <person name="Whitworth A.J."/>
            <person name="Schwartz S."/>
            <person name="Warren A.J."/>
            <person name="Minczuk M."/>
        </authorList>
    </citation>
    <scope>STRUCTURE BY ELECTRON MICROSCOPY (2.9 ANGSTROMS) IN COMPLEX WITH MTLSU</scope>
    <scope>SUBUNIT</scope>
</reference>
<name>RT30_HUMAN</name>
<gene>
    <name type="primary">MRPS30</name>
    <name type="synonym">PDCD9</name>
    <name type="ORF">BM-047</name>
</gene>
<comment type="subunit">
    <text evidence="4 5 6 7">Component of the mitochondrial large ribosomal subunit (mt-LSU) (PubMed:25278503, PubMed:25838379, PubMed:28892042, PubMed:35177605). Mature mammalian 55S mitochondrial ribosomes consist of a small (28S) and a large (39S) subunit. The 28S small subunit contains a 12S ribosomal RNA (12S mt-rRNA) and 30 different proteins. The 39S large subunit contains a 16S rRNA (16S mt-rRNA), a copy of mitochondrial valine transfer RNA (mt-tRNA(Val)), which plays an integral structural role, and 52 different proteins. mL65 forms a heterodimer with mL37.</text>
</comment>
<comment type="subcellular location">
    <subcellularLocation>
        <location evidence="3 6">Mitochondrion</location>
    </subcellularLocation>
</comment>
<comment type="tissue specificity">
    <text evidence="1 3">Heart, skeletal muscle, kidney and liver. Lower expression in placenta and peripheral blood leukocytes.</text>
</comment>
<comment type="similarity">
    <text evidence="11">Belongs to the mitochondrion-specific ribosomal protein mL65 family.</text>
</comment>
<comment type="sequence caution" evidence="11">
    <conflict type="frameshift">
        <sequence resource="EMBL-CDS" id="AAF67634"/>
    </conflict>
</comment>
<comment type="sequence caution" evidence="11">
    <conflict type="miscellaneous discrepancy">
        <sequence resource="EMBL-CDS" id="AAF67634"/>
    </conflict>
    <text>Sequencing errors.</text>
</comment>
<accession>Q9NP92</accession>
<accession>Q96I91</accession>
<accession>Q96Q19</accession>
<accession>Q9H0P8</accession>
<accession>Q9NSF9</accession>
<accession>Q9NZ76</accession>
<sequence>MAAARCWRPLLRGPRLSLHTAANAAATATETTCQDVAATPVARYPPIVASMTADSKAARLRRIERWQATVHAAESVDEKLRILTKMQFMKYMVYPQTFALNADRWYQYFTKTVFLSGLPPPPAEPEPEPEPEPEPALDLAALRAVACDCLLQEHFYLRRRRRVHRYEESEVISLPFLDQLVSTLVGLLSPHNPALAAAALDYRCPVHFYWVRGEEIIPRGHRRGRIDDLRYQIDDKPNNQIRISKQLAEFVPLDYSVPIEIPTIKCKPDKLPLFKRQYENHIFVGSKTADPCCYGHTQFHLLPDKLRRERLLRQNCADQIEVVFRANAIASLFAWTGAQAMYQGFWSEADVTRPFVSQAVITDGKYFSFFCYQLNTLALTTQADQNNPRKNICWGTQSKPLYETIEDNDVKGFNDDVLLQIVHFLLNRPKEEKSQLLEN</sequence>
<evidence type="ECO:0000269" key="1">
    <source>
    </source>
</evidence>
<evidence type="ECO:0000269" key="2">
    <source>
    </source>
</evidence>
<evidence type="ECO:0000269" key="3">
    <source>
    </source>
</evidence>
<evidence type="ECO:0000269" key="4">
    <source>
    </source>
</evidence>
<evidence type="ECO:0000269" key="5">
    <source>
    </source>
</evidence>
<evidence type="ECO:0000269" key="6">
    <source>
    </source>
</evidence>
<evidence type="ECO:0000269" key="7">
    <source>
    </source>
</evidence>
<evidence type="ECO:0000269" key="8">
    <source ref="2"/>
</evidence>
<evidence type="ECO:0000303" key="9">
    <source>
    </source>
</evidence>
<evidence type="ECO:0000303" key="10">
    <source>
    </source>
</evidence>
<evidence type="ECO:0000305" key="11"/>
<evidence type="ECO:0000312" key="12">
    <source>
        <dbReference type="EMBL" id="CAB90810.1"/>
    </source>
</evidence>
<evidence type="ECO:0007744" key="13">
    <source>
        <dbReference type="PDB" id="5OOL"/>
    </source>
</evidence>
<evidence type="ECO:0007744" key="14">
    <source>
        <dbReference type="PDB" id="5OOM"/>
    </source>
</evidence>
<evidence type="ECO:0007744" key="15">
    <source>
        <dbReference type="PDB" id="7QH6"/>
    </source>
</evidence>
<evidence type="ECO:0007744" key="16">
    <source>
        <dbReference type="PDB" id="7QH7"/>
    </source>
</evidence>
<evidence type="ECO:0007829" key="17">
    <source>
        <dbReference type="PDB" id="7OF0"/>
    </source>
</evidence>
<evidence type="ECO:0007829" key="18">
    <source>
        <dbReference type="PDB" id="7OIA"/>
    </source>
</evidence>
<evidence type="ECO:0007829" key="19">
    <source>
        <dbReference type="PDB" id="7QH6"/>
    </source>
</evidence>
<evidence type="ECO:0007829" key="20">
    <source>
        <dbReference type="PDB" id="8QU5"/>
    </source>
</evidence>
<keyword id="KW-0002">3D-structure</keyword>
<keyword id="KW-0496">Mitochondrion</keyword>
<keyword id="KW-1267">Proteomics identification</keyword>
<keyword id="KW-1185">Reference proteome</keyword>
<keyword id="KW-0687">Ribonucleoprotein</keyword>
<keyword id="KW-0689">Ribosomal protein</keyword>
<feature type="chain" id="PRO_0000087720" description="Large ribosomal subunit protein mL65">
    <location>
        <begin position="1"/>
        <end position="439"/>
    </location>
</feature>
<feature type="sequence variant" id="VAR_028023" description="In dbSNP:rs3747479." evidence="1 2 8">
    <original>C</original>
    <variation>S</variation>
    <location>
        <position position="33"/>
    </location>
</feature>
<feature type="sequence variant" id="VAR_052048" description="In dbSNP:rs35601455.">
    <original>A</original>
    <variation>V</variation>
    <location>
        <position position="102"/>
    </location>
</feature>
<feature type="sequence conflict" description="In Ref. 3; CAB66641." evidence="11" ref="3">
    <original>I</original>
    <variation>V</variation>
    <location>
        <position position="82"/>
    </location>
</feature>
<feature type="strand" evidence="17">
    <location>
        <begin position="51"/>
        <end position="55"/>
    </location>
</feature>
<feature type="helix" evidence="17">
    <location>
        <begin position="56"/>
        <end position="72"/>
    </location>
</feature>
<feature type="helix" evidence="17">
    <location>
        <begin position="76"/>
        <end position="84"/>
    </location>
</feature>
<feature type="strand" evidence="17">
    <location>
        <begin position="90"/>
        <end position="93"/>
    </location>
</feature>
<feature type="helix" evidence="17">
    <location>
        <begin position="102"/>
        <end position="110"/>
    </location>
</feature>
<feature type="strand" evidence="17">
    <location>
        <begin position="112"/>
        <end position="117"/>
    </location>
</feature>
<feature type="helix" evidence="17">
    <location>
        <begin position="141"/>
        <end position="154"/>
    </location>
</feature>
<feature type="helix" evidence="19">
    <location>
        <begin position="165"/>
        <end position="167"/>
    </location>
</feature>
<feature type="helix" evidence="17">
    <location>
        <begin position="168"/>
        <end position="188"/>
    </location>
</feature>
<feature type="turn" evidence="17">
    <location>
        <begin position="189"/>
        <end position="191"/>
    </location>
</feature>
<feature type="helix" evidence="17">
    <location>
        <begin position="193"/>
        <end position="196"/>
    </location>
</feature>
<feature type="strand" evidence="17">
    <location>
        <begin position="199"/>
        <end position="203"/>
    </location>
</feature>
<feature type="strand" evidence="17">
    <location>
        <begin position="206"/>
        <end position="216"/>
    </location>
</feature>
<feature type="turn" evidence="17">
    <location>
        <begin position="221"/>
        <end position="224"/>
    </location>
</feature>
<feature type="strand" evidence="17">
    <location>
        <begin position="226"/>
        <end position="235"/>
    </location>
</feature>
<feature type="strand" evidence="17">
    <location>
        <begin position="238"/>
        <end position="245"/>
    </location>
</feature>
<feature type="turn" evidence="17">
    <location>
        <begin position="268"/>
        <end position="272"/>
    </location>
</feature>
<feature type="strand" evidence="18">
    <location>
        <begin position="274"/>
        <end position="276"/>
    </location>
</feature>
<feature type="strand" evidence="17">
    <location>
        <begin position="283"/>
        <end position="286"/>
    </location>
</feature>
<feature type="strand" evidence="17">
    <location>
        <begin position="294"/>
        <end position="301"/>
    </location>
</feature>
<feature type="helix" evidence="17">
    <location>
        <begin position="304"/>
        <end position="306"/>
    </location>
</feature>
<feature type="helix" evidence="17">
    <location>
        <begin position="308"/>
        <end position="314"/>
    </location>
</feature>
<feature type="helix" evidence="17">
    <location>
        <begin position="318"/>
        <end position="343"/>
    </location>
</feature>
<feature type="strand" evidence="20">
    <location>
        <begin position="347"/>
        <end position="349"/>
    </location>
</feature>
<feature type="strand" evidence="17">
    <location>
        <begin position="355"/>
        <end position="374"/>
    </location>
</feature>
<feature type="helix" evidence="17">
    <location>
        <begin position="381"/>
        <end position="384"/>
    </location>
</feature>
<feature type="strand" evidence="17">
    <location>
        <begin position="391"/>
        <end position="395"/>
    </location>
</feature>
<feature type="strand" evidence="17">
    <location>
        <begin position="399"/>
        <end position="401"/>
    </location>
</feature>
<feature type="strand" evidence="17">
    <location>
        <begin position="403"/>
        <end position="406"/>
    </location>
</feature>
<feature type="strand" evidence="17">
    <location>
        <begin position="409"/>
        <end position="411"/>
    </location>
</feature>
<feature type="helix" evidence="17">
    <location>
        <begin position="415"/>
        <end position="426"/>
    </location>
</feature>
<proteinExistence type="evidence at protein level"/>
<dbReference type="EMBL" id="AF146192">
    <property type="protein sequence ID" value="AAF65227.1"/>
    <property type="molecule type" value="mRNA"/>
</dbReference>
<dbReference type="EMBL" id="AL355715">
    <property type="protein sequence ID" value="CAB90810.1"/>
    <property type="molecule type" value="mRNA"/>
</dbReference>
<dbReference type="EMBL" id="AL355716">
    <property type="protein sequence ID" value="CAB90811.1"/>
    <property type="molecule type" value="mRNA"/>
</dbReference>
<dbReference type="EMBL" id="AL136706">
    <property type="protein sequence ID" value="CAB66641.1"/>
    <property type="molecule type" value="mRNA"/>
</dbReference>
<dbReference type="EMBL" id="AK074777">
    <property type="protein sequence ID" value="BAC11202.1"/>
    <property type="molecule type" value="mRNA"/>
</dbReference>
<dbReference type="EMBL" id="BC007735">
    <property type="protein sequence ID" value="AAH07735.1"/>
    <property type="molecule type" value="mRNA"/>
</dbReference>
<dbReference type="EMBL" id="AF217523">
    <property type="protein sequence ID" value="AAF67634.1"/>
    <property type="status" value="ALT_SEQ"/>
    <property type="molecule type" value="mRNA"/>
</dbReference>
<dbReference type="EMBL" id="AB061211">
    <property type="protein sequence ID" value="BAB54961.1"/>
    <property type="molecule type" value="Genomic_DNA"/>
</dbReference>
<dbReference type="CCDS" id="CCDS3951.1"/>
<dbReference type="RefSeq" id="NP_057724.2">
    <property type="nucleotide sequence ID" value="NM_016640.4"/>
</dbReference>
<dbReference type="PDB" id="3J7Y">
    <property type="method" value="EM"/>
    <property type="resolution" value="3.40 A"/>
    <property type="chains" value="s=1-439"/>
</dbReference>
<dbReference type="PDB" id="3J9M">
    <property type="method" value="EM"/>
    <property type="resolution" value="3.50 A"/>
    <property type="chains" value="s=1-439"/>
</dbReference>
<dbReference type="PDB" id="5OOL">
    <property type="method" value="EM"/>
    <property type="resolution" value="3.06 A"/>
    <property type="chains" value="s=1-439"/>
</dbReference>
<dbReference type="PDB" id="5OOM">
    <property type="method" value="EM"/>
    <property type="resolution" value="3.03 A"/>
    <property type="chains" value="s=1-439"/>
</dbReference>
<dbReference type="PDB" id="6I9R">
    <property type="method" value="EM"/>
    <property type="resolution" value="3.90 A"/>
    <property type="chains" value="s=1-439"/>
</dbReference>
<dbReference type="PDB" id="6NU2">
    <property type="method" value="EM"/>
    <property type="resolution" value="3.90 A"/>
    <property type="chains" value="s=41-430"/>
</dbReference>
<dbReference type="PDB" id="6NU3">
    <property type="method" value="EM"/>
    <property type="resolution" value="4.40 A"/>
    <property type="chains" value="s=1-439"/>
</dbReference>
<dbReference type="PDB" id="6VLZ">
    <property type="method" value="EM"/>
    <property type="resolution" value="2.97 A"/>
    <property type="chains" value="s=1-439"/>
</dbReference>
<dbReference type="PDB" id="6VMI">
    <property type="method" value="EM"/>
    <property type="resolution" value="2.96 A"/>
    <property type="chains" value="s=1-439"/>
</dbReference>
<dbReference type="PDB" id="6ZM5">
    <property type="method" value="EM"/>
    <property type="resolution" value="2.89 A"/>
    <property type="chains" value="s=1-439"/>
</dbReference>
<dbReference type="PDB" id="6ZM6">
    <property type="method" value="EM"/>
    <property type="resolution" value="2.59 A"/>
    <property type="chains" value="s=1-439"/>
</dbReference>
<dbReference type="PDB" id="6ZS9">
    <property type="method" value="EM"/>
    <property type="resolution" value="4.00 A"/>
    <property type="chains" value="s=1-439"/>
</dbReference>
<dbReference type="PDB" id="6ZSA">
    <property type="method" value="EM"/>
    <property type="resolution" value="4.00 A"/>
    <property type="chains" value="s=1-439"/>
</dbReference>
<dbReference type="PDB" id="6ZSB">
    <property type="method" value="EM"/>
    <property type="resolution" value="4.50 A"/>
    <property type="chains" value="s=1-439"/>
</dbReference>
<dbReference type="PDB" id="6ZSC">
    <property type="method" value="EM"/>
    <property type="resolution" value="3.50 A"/>
    <property type="chains" value="s=1-439"/>
</dbReference>
<dbReference type="PDB" id="6ZSD">
    <property type="method" value="EM"/>
    <property type="resolution" value="3.70 A"/>
    <property type="chains" value="s=1-439"/>
</dbReference>
<dbReference type="PDB" id="6ZSE">
    <property type="method" value="EM"/>
    <property type="resolution" value="5.00 A"/>
    <property type="chains" value="s=1-439"/>
</dbReference>
<dbReference type="PDB" id="6ZSG">
    <property type="method" value="EM"/>
    <property type="resolution" value="4.00 A"/>
    <property type="chains" value="s=1-439"/>
</dbReference>
<dbReference type="PDB" id="7A5F">
    <property type="method" value="EM"/>
    <property type="resolution" value="4.40 A"/>
    <property type="chains" value="s3/t3=1-439"/>
</dbReference>
<dbReference type="PDB" id="7A5G">
    <property type="method" value="EM"/>
    <property type="resolution" value="4.33 A"/>
    <property type="chains" value="s3/t3=1-439"/>
</dbReference>
<dbReference type="PDB" id="7A5H">
    <property type="method" value="EM"/>
    <property type="resolution" value="3.30 A"/>
    <property type="chains" value="s=1-439"/>
</dbReference>
<dbReference type="PDB" id="7A5I">
    <property type="method" value="EM"/>
    <property type="resolution" value="3.70 A"/>
    <property type="chains" value="s3=1-439"/>
</dbReference>
<dbReference type="PDB" id="7A5J">
    <property type="method" value="EM"/>
    <property type="resolution" value="3.10 A"/>
    <property type="chains" value="s=1-439"/>
</dbReference>
<dbReference type="PDB" id="7A5K">
    <property type="method" value="EM"/>
    <property type="resolution" value="3.70 A"/>
    <property type="chains" value="s3=1-439"/>
</dbReference>
<dbReference type="PDB" id="7L08">
    <property type="method" value="EM"/>
    <property type="resolution" value="3.49 A"/>
    <property type="chains" value="s=1-439"/>
</dbReference>
<dbReference type="PDB" id="7L20">
    <property type="method" value="EM"/>
    <property type="resolution" value="3.15 A"/>
    <property type="chains" value="s=1-439"/>
</dbReference>
<dbReference type="PDB" id="7O9K">
    <property type="method" value="EM"/>
    <property type="resolution" value="3.10 A"/>
    <property type="chains" value="s=1-439"/>
</dbReference>
<dbReference type="PDB" id="7O9M">
    <property type="method" value="EM"/>
    <property type="resolution" value="2.50 A"/>
    <property type="chains" value="s=1-439"/>
</dbReference>
<dbReference type="PDB" id="7ODR">
    <property type="method" value="EM"/>
    <property type="resolution" value="2.90 A"/>
    <property type="chains" value="s=1-439"/>
</dbReference>
<dbReference type="PDB" id="7ODS">
    <property type="method" value="EM"/>
    <property type="resolution" value="3.10 A"/>
    <property type="chains" value="s=1-439"/>
</dbReference>
<dbReference type="PDB" id="7ODT">
    <property type="method" value="EM"/>
    <property type="resolution" value="3.10 A"/>
    <property type="chains" value="s=1-439"/>
</dbReference>
<dbReference type="PDB" id="7OF0">
    <property type="method" value="EM"/>
    <property type="resolution" value="2.20 A"/>
    <property type="chains" value="s=1-439"/>
</dbReference>
<dbReference type="PDB" id="7OF2">
    <property type="method" value="EM"/>
    <property type="resolution" value="2.70 A"/>
    <property type="chains" value="s=1-439"/>
</dbReference>
<dbReference type="PDB" id="7OF3">
    <property type="method" value="EM"/>
    <property type="resolution" value="2.70 A"/>
    <property type="chains" value="s=1-439"/>
</dbReference>
<dbReference type="PDB" id="7OF4">
    <property type="method" value="EM"/>
    <property type="resolution" value="2.70 A"/>
    <property type="chains" value="s=1-439"/>
</dbReference>
<dbReference type="PDB" id="7OF5">
    <property type="method" value="EM"/>
    <property type="resolution" value="2.90 A"/>
    <property type="chains" value="s=1-439"/>
</dbReference>
<dbReference type="PDB" id="7OF6">
    <property type="method" value="EM"/>
    <property type="resolution" value="2.60 A"/>
    <property type="chains" value="s=1-439"/>
</dbReference>
<dbReference type="PDB" id="7OF7">
    <property type="method" value="EM"/>
    <property type="resolution" value="2.50 A"/>
    <property type="chains" value="s=1-439"/>
</dbReference>
<dbReference type="PDB" id="7OG4">
    <property type="method" value="EM"/>
    <property type="resolution" value="3.80 A"/>
    <property type="chains" value="s=1-439"/>
</dbReference>
<dbReference type="PDB" id="7OI6">
    <property type="method" value="EM"/>
    <property type="resolution" value="5.70 A"/>
    <property type="chains" value="s=1-439"/>
</dbReference>
<dbReference type="PDB" id="7OI7">
    <property type="method" value="EM"/>
    <property type="resolution" value="3.50 A"/>
    <property type="chains" value="s=1-439"/>
</dbReference>
<dbReference type="PDB" id="7OI8">
    <property type="method" value="EM"/>
    <property type="resolution" value="3.50 A"/>
    <property type="chains" value="s=1-439"/>
</dbReference>
<dbReference type="PDB" id="7OI9">
    <property type="method" value="EM"/>
    <property type="resolution" value="3.30 A"/>
    <property type="chains" value="s=1-439"/>
</dbReference>
<dbReference type="PDB" id="7OIA">
    <property type="method" value="EM"/>
    <property type="resolution" value="3.20 A"/>
    <property type="chains" value="s=1-439"/>
</dbReference>
<dbReference type="PDB" id="7OIB">
    <property type="method" value="EM"/>
    <property type="resolution" value="3.30 A"/>
    <property type="chains" value="s=1-439"/>
</dbReference>
<dbReference type="PDB" id="7OIC">
    <property type="method" value="EM"/>
    <property type="resolution" value="3.10 A"/>
    <property type="chains" value="s=1-439"/>
</dbReference>
<dbReference type="PDB" id="7OID">
    <property type="method" value="EM"/>
    <property type="resolution" value="3.70 A"/>
    <property type="chains" value="s=1-439"/>
</dbReference>
<dbReference type="PDB" id="7OIE">
    <property type="method" value="EM"/>
    <property type="resolution" value="3.50 A"/>
    <property type="chains" value="s=1-439"/>
</dbReference>
<dbReference type="PDB" id="7PD3">
    <property type="method" value="EM"/>
    <property type="resolution" value="3.40 A"/>
    <property type="chains" value="s=1-439"/>
</dbReference>
<dbReference type="PDB" id="7PO4">
    <property type="method" value="EM"/>
    <property type="resolution" value="2.56 A"/>
    <property type="chains" value="s=1-439"/>
</dbReference>
<dbReference type="PDB" id="7QH6">
    <property type="method" value="EM"/>
    <property type="resolution" value="3.08 A"/>
    <property type="chains" value="s=1-439"/>
</dbReference>
<dbReference type="PDB" id="7QH7">
    <property type="method" value="EM"/>
    <property type="resolution" value="2.89 A"/>
    <property type="chains" value="s=41-430"/>
</dbReference>
<dbReference type="PDB" id="7QI4">
    <property type="method" value="EM"/>
    <property type="resolution" value="2.21 A"/>
    <property type="chains" value="s=1-439"/>
</dbReference>
<dbReference type="PDB" id="7QI5">
    <property type="method" value="EM"/>
    <property type="resolution" value="2.63 A"/>
    <property type="chains" value="s=1-439"/>
</dbReference>
<dbReference type="PDB" id="7QI6">
    <property type="method" value="EM"/>
    <property type="resolution" value="2.98 A"/>
    <property type="chains" value="s=1-439"/>
</dbReference>
<dbReference type="PDB" id="8ANY">
    <property type="method" value="EM"/>
    <property type="resolution" value="2.85 A"/>
    <property type="chains" value="s=1-439"/>
</dbReference>
<dbReference type="PDB" id="8K2A">
    <property type="method" value="EM"/>
    <property type="resolution" value="2.90 A"/>
    <property type="chains" value="Sf=1-439"/>
</dbReference>
<dbReference type="PDB" id="8K2B">
    <property type="method" value="EM"/>
    <property type="resolution" value="3.40 A"/>
    <property type="chains" value="Sf=1-439"/>
</dbReference>
<dbReference type="PDB" id="8OIR">
    <property type="method" value="EM"/>
    <property type="resolution" value="3.10 A"/>
    <property type="chains" value="Bi=1-439"/>
</dbReference>
<dbReference type="PDB" id="8OIT">
    <property type="method" value="EM"/>
    <property type="resolution" value="2.90 A"/>
    <property type="chains" value="Bi=1-439"/>
</dbReference>
<dbReference type="PDB" id="8PK0">
    <property type="method" value="EM"/>
    <property type="resolution" value="3.03 A"/>
    <property type="chains" value="s=1-439"/>
</dbReference>
<dbReference type="PDB" id="8QSJ">
    <property type="method" value="EM"/>
    <property type="resolution" value="3.00 A"/>
    <property type="chains" value="s=1-439"/>
</dbReference>
<dbReference type="PDB" id="8QU5">
    <property type="method" value="EM"/>
    <property type="resolution" value="2.42 A"/>
    <property type="chains" value="s=1-439"/>
</dbReference>
<dbReference type="PDB" id="8RRI">
    <property type="method" value="EM"/>
    <property type="resolution" value="2.40 A"/>
    <property type="chains" value="s=1-439"/>
</dbReference>
<dbReference type="PDB" id="8XT0">
    <property type="method" value="EM"/>
    <property type="resolution" value="3.20 A"/>
    <property type="chains" value="Sf=1-439"/>
</dbReference>
<dbReference type="PDB" id="8XT1">
    <property type="method" value="EM"/>
    <property type="resolution" value="3.10 A"/>
    <property type="chains" value="Sf=1-439"/>
</dbReference>
<dbReference type="PDB" id="8XT2">
    <property type="method" value="EM"/>
    <property type="resolution" value="3.30 A"/>
    <property type="chains" value="Sf=1-439"/>
</dbReference>
<dbReference type="PDB" id="8XT3">
    <property type="method" value="EM"/>
    <property type="resolution" value="3.10 A"/>
    <property type="chains" value="Sf=1-439"/>
</dbReference>
<dbReference type="PDBsum" id="3J7Y"/>
<dbReference type="PDBsum" id="3J9M"/>
<dbReference type="PDBsum" id="5OOL"/>
<dbReference type="PDBsum" id="5OOM"/>
<dbReference type="PDBsum" id="6I9R"/>
<dbReference type="PDBsum" id="6NU2"/>
<dbReference type="PDBsum" id="6NU3"/>
<dbReference type="PDBsum" id="6VLZ"/>
<dbReference type="PDBsum" id="6VMI"/>
<dbReference type="PDBsum" id="6ZM5"/>
<dbReference type="PDBsum" id="6ZM6"/>
<dbReference type="PDBsum" id="6ZS9"/>
<dbReference type="PDBsum" id="6ZSA"/>
<dbReference type="PDBsum" id="6ZSB"/>
<dbReference type="PDBsum" id="6ZSC"/>
<dbReference type="PDBsum" id="6ZSD"/>
<dbReference type="PDBsum" id="6ZSE"/>
<dbReference type="PDBsum" id="6ZSG"/>
<dbReference type="PDBsum" id="7A5F"/>
<dbReference type="PDBsum" id="7A5G"/>
<dbReference type="PDBsum" id="7A5H"/>
<dbReference type="PDBsum" id="7A5I"/>
<dbReference type="PDBsum" id="7A5J"/>
<dbReference type="PDBsum" id="7A5K"/>
<dbReference type="PDBsum" id="7L08"/>
<dbReference type="PDBsum" id="7L20"/>
<dbReference type="PDBsum" id="7O9K"/>
<dbReference type="PDBsum" id="7O9M"/>
<dbReference type="PDBsum" id="7ODR"/>
<dbReference type="PDBsum" id="7ODS"/>
<dbReference type="PDBsum" id="7ODT"/>
<dbReference type="PDBsum" id="7OF0"/>
<dbReference type="PDBsum" id="7OF2"/>
<dbReference type="PDBsum" id="7OF3"/>
<dbReference type="PDBsum" id="7OF4"/>
<dbReference type="PDBsum" id="7OF5"/>
<dbReference type="PDBsum" id="7OF6"/>
<dbReference type="PDBsum" id="7OF7"/>
<dbReference type="PDBsum" id="7OG4"/>
<dbReference type="PDBsum" id="7OI6"/>
<dbReference type="PDBsum" id="7OI7"/>
<dbReference type="PDBsum" id="7OI8"/>
<dbReference type="PDBsum" id="7OI9"/>
<dbReference type="PDBsum" id="7OIA"/>
<dbReference type="PDBsum" id="7OIB"/>
<dbReference type="PDBsum" id="7OIC"/>
<dbReference type="PDBsum" id="7OID"/>
<dbReference type="PDBsum" id="7OIE"/>
<dbReference type="PDBsum" id="7PD3"/>
<dbReference type="PDBsum" id="7PO4"/>
<dbReference type="PDBsum" id="7QH6"/>
<dbReference type="PDBsum" id="7QH7"/>
<dbReference type="PDBsum" id="7QI4"/>
<dbReference type="PDBsum" id="7QI5"/>
<dbReference type="PDBsum" id="7QI6"/>
<dbReference type="PDBsum" id="8ANY"/>
<dbReference type="PDBsum" id="8K2A"/>
<dbReference type="PDBsum" id="8K2B"/>
<dbReference type="PDBsum" id="8OIR"/>
<dbReference type="PDBsum" id="8OIT"/>
<dbReference type="PDBsum" id="8PK0"/>
<dbReference type="PDBsum" id="8QSJ"/>
<dbReference type="PDBsum" id="8QU5"/>
<dbReference type="PDBsum" id="8RRI"/>
<dbReference type="PDBsum" id="8XT0"/>
<dbReference type="PDBsum" id="8XT1"/>
<dbReference type="PDBsum" id="8XT2"/>
<dbReference type="PDBsum" id="8XT3"/>
<dbReference type="EMDB" id="EMD-0514"/>
<dbReference type="EMDB" id="EMD-0515"/>
<dbReference type="EMDB" id="EMD-11278"/>
<dbReference type="EMDB" id="EMD-11279"/>
<dbReference type="EMDB" id="EMD-11390"/>
<dbReference type="EMDB" id="EMD-11391"/>
<dbReference type="EMDB" id="EMD-11392"/>
<dbReference type="EMDB" id="EMD-11393"/>
<dbReference type="EMDB" id="EMD-11394"/>
<dbReference type="EMDB" id="EMD-11395"/>
<dbReference type="EMDB" id="EMD-11397"/>
<dbReference type="EMDB" id="EMD-11641"/>
<dbReference type="EMDB" id="EMD-11642"/>
<dbReference type="EMDB" id="EMD-11643"/>
<dbReference type="EMDB" id="EMD-11644"/>
<dbReference type="EMDB" id="EMD-11645"/>
<dbReference type="EMDB" id="EMD-11646"/>
<dbReference type="EMDB" id="EMD-12763"/>
<dbReference type="EMDB" id="EMD-12764"/>
<dbReference type="EMDB" id="EMD-12845"/>
<dbReference type="EMDB" id="EMD-12846"/>
<dbReference type="EMDB" id="EMD-12847"/>
<dbReference type="EMDB" id="EMD-12865"/>
<dbReference type="EMDB" id="EMD-12867"/>
<dbReference type="EMDB" id="EMD-12868"/>
<dbReference type="EMDB" id="EMD-12869"/>
<dbReference type="EMDB" id="EMD-12870"/>
<dbReference type="EMDB" id="EMD-12871"/>
<dbReference type="EMDB" id="EMD-12872"/>
<dbReference type="EMDB" id="EMD-12877"/>
<dbReference type="EMDB" id="EMD-12919"/>
<dbReference type="EMDB" id="EMD-12920"/>
<dbReference type="EMDB" id="EMD-12921"/>
<dbReference type="EMDB" id="EMD-12922"/>
<dbReference type="EMDB" id="EMD-12923"/>
<dbReference type="EMDB" id="EMD-12924"/>
<dbReference type="EMDB" id="EMD-12925"/>
<dbReference type="EMDB" id="EMD-12926"/>
<dbReference type="EMDB" id="EMD-12927"/>
<dbReference type="EMDB" id="EMD-13329"/>
<dbReference type="EMDB" id="EMD-13562"/>
<dbReference type="EMDB" id="EMD-13965"/>
<dbReference type="EMDB" id="EMD-13967"/>
<dbReference type="EMDB" id="EMD-13980"/>
<dbReference type="EMDB" id="EMD-13981"/>
<dbReference type="EMDB" id="EMD-13982"/>
<dbReference type="EMDB" id="EMD-15544"/>
<dbReference type="EMDB" id="EMD-16897"/>
<dbReference type="EMDB" id="EMD-16899"/>
<dbReference type="EMDB" id="EMD-17719"/>
<dbReference type="EMDB" id="EMD-19460"/>
<dbReference type="EMDB" id="EMD-21233"/>
<dbReference type="EMDB" id="EMD-21242"/>
<dbReference type="EMDB" id="EMD-23096"/>
<dbReference type="EMDB" id="EMD-23121"/>
<dbReference type="EMDB" id="EMD-36836"/>
<dbReference type="EMDB" id="EMD-36837"/>
<dbReference type="EMDB" id="EMD-3842"/>
<dbReference type="EMDB" id="EMD-3843"/>
<dbReference type="EMDB" id="EMD-38632"/>
<dbReference type="EMDB" id="EMD-38633"/>
<dbReference type="EMDB" id="EMD-38634"/>
<dbReference type="EMDB" id="EMD-38635"/>
<dbReference type="EMDB" id="EMD-4434"/>
<dbReference type="SMR" id="Q9NP92"/>
<dbReference type="BioGRID" id="116091">
    <property type="interactions" value="230"/>
</dbReference>
<dbReference type="ComplexPortal" id="CPX-5226">
    <property type="entry name" value="39S mitochondrial large ribosomal subunit"/>
</dbReference>
<dbReference type="CORUM" id="Q9NP92"/>
<dbReference type="FunCoup" id="Q9NP92">
    <property type="interactions" value="1333"/>
</dbReference>
<dbReference type="IntAct" id="Q9NP92">
    <property type="interactions" value="138"/>
</dbReference>
<dbReference type="MINT" id="Q9NP92"/>
<dbReference type="STRING" id="9606.ENSP00000424328"/>
<dbReference type="GlyGen" id="Q9NP92">
    <property type="glycosylation" value="1 site, 1 O-linked glycan (1 site)"/>
</dbReference>
<dbReference type="iPTMnet" id="Q9NP92"/>
<dbReference type="PhosphoSitePlus" id="Q9NP92"/>
<dbReference type="SwissPalm" id="Q9NP92"/>
<dbReference type="BioMuta" id="MRPS30"/>
<dbReference type="DMDM" id="116242771"/>
<dbReference type="jPOST" id="Q9NP92"/>
<dbReference type="MassIVE" id="Q9NP92"/>
<dbReference type="PaxDb" id="9606-ENSP00000424328"/>
<dbReference type="PeptideAtlas" id="Q9NP92"/>
<dbReference type="ProteomicsDB" id="81936"/>
<dbReference type="Pumba" id="Q9NP92"/>
<dbReference type="Antibodypedia" id="10864">
    <property type="antibodies" value="134 antibodies from 22 providers"/>
</dbReference>
<dbReference type="DNASU" id="10884"/>
<dbReference type="Ensembl" id="ENST00000507110.6">
    <property type="protein sequence ID" value="ENSP00000424328.1"/>
    <property type="gene ID" value="ENSG00000112996.11"/>
</dbReference>
<dbReference type="GeneID" id="10884"/>
<dbReference type="KEGG" id="hsa:10884"/>
<dbReference type="MANE-Select" id="ENST00000507110.6">
    <property type="protein sequence ID" value="ENSP00000424328.1"/>
    <property type="RefSeq nucleotide sequence ID" value="NM_016640.4"/>
    <property type="RefSeq protein sequence ID" value="NP_057724.2"/>
</dbReference>
<dbReference type="UCSC" id="uc003joh.4">
    <property type="organism name" value="human"/>
</dbReference>
<dbReference type="AGR" id="HGNC:8769"/>
<dbReference type="CTD" id="10884"/>
<dbReference type="DisGeNET" id="10884"/>
<dbReference type="GeneCards" id="MRPS30"/>
<dbReference type="HGNC" id="HGNC:8769">
    <property type="gene designation" value="MRPS30"/>
</dbReference>
<dbReference type="HPA" id="ENSG00000112996">
    <property type="expression patterns" value="Low tissue specificity"/>
</dbReference>
<dbReference type="MIM" id="611991">
    <property type="type" value="gene"/>
</dbReference>
<dbReference type="neXtProt" id="NX_Q9NP92"/>
<dbReference type="OpenTargets" id="ENSG00000112996"/>
<dbReference type="PharmGKB" id="PA31018"/>
<dbReference type="VEuPathDB" id="HostDB:ENSG00000112996"/>
<dbReference type="eggNOG" id="KOG4461">
    <property type="taxonomic scope" value="Eukaryota"/>
</dbReference>
<dbReference type="GeneTree" id="ENSGT00390000001442"/>
<dbReference type="HOGENOM" id="CLU_049608_0_0_1"/>
<dbReference type="InParanoid" id="Q9NP92"/>
<dbReference type="OMA" id="VNMPRYY"/>
<dbReference type="OrthoDB" id="6041973at2759"/>
<dbReference type="PAN-GO" id="Q9NP92">
    <property type="GO annotations" value="1 GO annotation based on evolutionary models"/>
</dbReference>
<dbReference type="PhylomeDB" id="Q9NP92"/>
<dbReference type="TreeFam" id="TF320686"/>
<dbReference type="PathwayCommons" id="Q9NP92"/>
<dbReference type="Reactome" id="R-HSA-5368286">
    <property type="pathway name" value="Mitochondrial translation initiation"/>
</dbReference>
<dbReference type="Reactome" id="R-HSA-5389840">
    <property type="pathway name" value="Mitochondrial translation elongation"/>
</dbReference>
<dbReference type="Reactome" id="R-HSA-5419276">
    <property type="pathway name" value="Mitochondrial translation termination"/>
</dbReference>
<dbReference type="SignaLink" id="Q9NP92"/>
<dbReference type="SIGNOR" id="Q9NP92"/>
<dbReference type="BioGRID-ORCS" id="10884">
    <property type="hits" value="234 hits in 1159 CRISPR screens"/>
</dbReference>
<dbReference type="ChiTaRS" id="MRPS30">
    <property type="organism name" value="human"/>
</dbReference>
<dbReference type="EvolutionaryTrace" id="Q9NP92"/>
<dbReference type="GeneWiki" id="MRPS30"/>
<dbReference type="GenomeRNAi" id="10884"/>
<dbReference type="Pharos" id="Q9NP92">
    <property type="development level" value="Tbio"/>
</dbReference>
<dbReference type="PRO" id="PR:Q9NP92"/>
<dbReference type="Proteomes" id="UP000005640">
    <property type="component" value="Chromosome 5"/>
</dbReference>
<dbReference type="RNAct" id="Q9NP92">
    <property type="molecule type" value="protein"/>
</dbReference>
<dbReference type="Bgee" id="ENSG00000112996">
    <property type="expression patterns" value="Expressed in adrenal tissue and 204 other cell types or tissues"/>
</dbReference>
<dbReference type="GO" id="GO:0005743">
    <property type="term" value="C:mitochondrial inner membrane"/>
    <property type="evidence" value="ECO:0000304"/>
    <property type="project" value="Reactome"/>
</dbReference>
<dbReference type="GO" id="GO:0005762">
    <property type="term" value="C:mitochondrial large ribosomal subunit"/>
    <property type="evidence" value="ECO:0000314"/>
    <property type="project" value="UniProtKB"/>
</dbReference>
<dbReference type="GO" id="GO:0005739">
    <property type="term" value="C:mitochondrion"/>
    <property type="evidence" value="ECO:0000314"/>
    <property type="project" value="UniProtKB"/>
</dbReference>
<dbReference type="GO" id="GO:0003723">
    <property type="term" value="F:RNA binding"/>
    <property type="evidence" value="ECO:0007005"/>
    <property type="project" value="UniProtKB"/>
</dbReference>
<dbReference type="GO" id="GO:0003735">
    <property type="term" value="F:structural constituent of ribosome"/>
    <property type="evidence" value="ECO:0007669"/>
    <property type="project" value="InterPro"/>
</dbReference>
<dbReference type="GO" id="GO:0006915">
    <property type="term" value="P:apoptotic process"/>
    <property type="evidence" value="ECO:0000304"/>
    <property type="project" value="ProtInc"/>
</dbReference>
<dbReference type="GO" id="GO:0032543">
    <property type="term" value="P:mitochondrial translation"/>
    <property type="evidence" value="ECO:0000303"/>
    <property type="project" value="ComplexPortal"/>
</dbReference>
<dbReference type="InterPro" id="IPR010793">
    <property type="entry name" value="Ribosomal_mL37/mL65"/>
</dbReference>
<dbReference type="InterPro" id="IPR039982">
    <property type="entry name" value="Ribosomal_mL65"/>
</dbReference>
<dbReference type="PANTHER" id="PTHR13014:SF3">
    <property type="entry name" value="LARGE RIBOSOMAL SUBUNIT PROTEIN ML65"/>
    <property type="match status" value="1"/>
</dbReference>
<dbReference type="PANTHER" id="PTHR13014">
    <property type="entry name" value="MITOCHONDRIAL 28S RIBOSOMAL PROTEIN S30/P52 PRO-APOTOTIC PROTEIN"/>
    <property type="match status" value="1"/>
</dbReference>
<dbReference type="Pfam" id="PF07147">
    <property type="entry name" value="PDCD9"/>
    <property type="match status" value="1"/>
</dbReference>